<name>RAC3_MOUSE</name>
<comment type="function">
    <text evidence="2">Plasma membrane-associated small GTPase which cycles between an active GTP-bound and inactive GDP-bound state. In active state binds to a variety of effector proteins to regulate cellular responses, such as cell spreading and the formation of actin-based protusions including lamellipodia and membrane ruffles. Promotes cell adhesion and spreading on fibrinogen in a CIB1 and alpha-IIb/beta3 integrin-mediated manner.</text>
</comment>
<comment type="catalytic activity">
    <reaction evidence="2">
        <text>GTP + H2O = GDP + phosphate + H(+)</text>
        <dbReference type="Rhea" id="RHEA:19669"/>
        <dbReference type="ChEBI" id="CHEBI:15377"/>
        <dbReference type="ChEBI" id="CHEBI:15378"/>
        <dbReference type="ChEBI" id="CHEBI:37565"/>
        <dbReference type="ChEBI" id="CHEBI:43474"/>
        <dbReference type="ChEBI" id="CHEBI:58189"/>
        <dbReference type="EC" id="3.6.5.2"/>
    </reaction>
    <physiologicalReaction direction="left-to-right" evidence="4">
        <dbReference type="Rhea" id="RHEA:19670"/>
    </physiologicalReaction>
</comment>
<comment type="activity regulation">
    <text evidence="2">Regulated by guanine nucleotide exchange factors (GEFs) which promote the exchange of bound GDP for free GTP, GTPase activating proteins (GAPs) which increase the GTP hydrolysis activity, and GDP dissociation inhibitors which inhibit the dissociation of the nucleotide from the GTPase. Regulated by the GEF protein DOCK7.</text>
</comment>
<comment type="subunit">
    <text evidence="2">Interacts with the GEF protein DOCK7, which promotes the exchange between GDP and GTP, and therefore activates it. Interacts with C1D. Interacts (via C-terminal region) with CIB1; the interaction induces their association with the cytoskeleton upon alpha-IIb/beta3 integrin-mediated adhesion. Interacts with NRBP.</text>
</comment>
<comment type="interaction">
    <interactant intactId="EBI-644949">
        <id>P60764</id>
    </interactant>
    <interactant intactId="EBI-494354">
        <id>Q99PT1</id>
        <label>Arhgdia</label>
    </interactant>
    <organismsDiffer>false</organismsDiffer>
    <experiments>3</experiments>
</comment>
<comment type="subcellular location">
    <subcellularLocation>
        <location evidence="2">Cytoplasm</location>
    </subcellularLocation>
    <subcellularLocation>
        <location evidence="2">Endomembrane system</location>
    </subcellularLocation>
    <subcellularLocation>
        <location evidence="2">Cell projection</location>
        <location evidence="2">Lamellipodium</location>
    </subcellularLocation>
    <subcellularLocation>
        <location evidence="2">Cytoplasm</location>
        <location evidence="2">Perinuclear region</location>
    </subcellularLocation>
    <subcellularLocation>
        <location evidence="2">Cell membrane</location>
    </subcellularLocation>
    <subcellularLocation>
        <location evidence="2">Cytoplasm</location>
        <location evidence="2">Cytoskeleton</location>
    </subcellularLocation>
    <text evidence="2">Membrane-associated when activated. Colocalizes with NRBP to endomembranes and at the cell periphery in lamellipodia. Colocalized with CIB1 in the perinuclear area and at the cell periphery.</text>
</comment>
<comment type="PTM">
    <text evidence="2">Ubiquitinated at Lys-166 in a FBXL19-mediated manner; leading to proteasomal degradation.</text>
</comment>
<comment type="similarity">
    <text evidence="4">Belongs to the small GTPase superfamily. Rho family.</text>
</comment>
<organism>
    <name type="scientific">Mus musculus</name>
    <name type="common">Mouse</name>
    <dbReference type="NCBI Taxonomy" id="10090"/>
    <lineage>
        <taxon>Eukaryota</taxon>
        <taxon>Metazoa</taxon>
        <taxon>Chordata</taxon>
        <taxon>Craniata</taxon>
        <taxon>Vertebrata</taxon>
        <taxon>Euteleostomi</taxon>
        <taxon>Mammalia</taxon>
        <taxon>Eutheria</taxon>
        <taxon>Euarchontoglires</taxon>
        <taxon>Glires</taxon>
        <taxon>Rodentia</taxon>
        <taxon>Myomorpha</taxon>
        <taxon>Muroidea</taxon>
        <taxon>Muridae</taxon>
        <taxon>Murinae</taxon>
        <taxon>Mus</taxon>
        <taxon>Mus</taxon>
    </lineage>
</organism>
<protein>
    <recommendedName>
        <fullName>Ras-related C3 botulinum toxin substrate 3</fullName>
        <ecNumber evidence="2">3.6.5.2</ecNumber>
    </recommendedName>
    <alternativeName>
        <fullName>p21-Rac3</fullName>
    </alternativeName>
</protein>
<proteinExistence type="evidence at protein level"/>
<gene>
    <name evidence="5" type="primary">Rac3</name>
</gene>
<accession>P60764</accession>
<accession>O14658</accession>
<keyword id="KW-1003">Cell membrane</keyword>
<keyword id="KW-0966">Cell projection</keyword>
<keyword id="KW-0963">Cytoplasm</keyword>
<keyword id="KW-0206">Cytoskeleton</keyword>
<keyword id="KW-0342">GTP-binding</keyword>
<keyword id="KW-0378">Hydrolase</keyword>
<keyword id="KW-1017">Isopeptide bond</keyword>
<keyword id="KW-0449">Lipoprotein</keyword>
<keyword id="KW-0472">Membrane</keyword>
<keyword id="KW-0488">Methylation</keyword>
<keyword id="KW-0547">Nucleotide-binding</keyword>
<keyword id="KW-0636">Prenylation</keyword>
<keyword id="KW-1185">Reference proteome</keyword>
<keyword id="KW-0832">Ubl conjugation</keyword>
<feature type="chain" id="PRO_0000198890" description="Ras-related C3 botulinum toxin substrate 3">
    <location>
        <begin position="1"/>
        <end position="189"/>
    </location>
</feature>
<feature type="propeptide" id="PRO_0000281241" description="Removed in mature form" evidence="1">
    <location>
        <begin position="190"/>
        <end position="192"/>
    </location>
</feature>
<feature type="short sequence motif" description="Effector region" evidence="3">
    <location>
        <begin position="32"/>
        <end position="40"/>
    </location>
</feature>
<feature type="binding site" evidence="1">
    <location>
        <begin position="10"/>
        <end position="17"/>
    </location>
    <ligand>
        <name>GTP</name>
        <dbReference type="ChEBI" id="CHEBI:37565"/>
    </ligand>
</feature>
<feature type="binding site" evidence="1">
    <location>
        <begin position="57"/>
        <end position="61"/>
    </location>
    <ligand>
        <name>GTP</name>
        <dbReference type="ChEBI" id="CHEBI:37565"/>
    </ligand>
</feature>
<feature type="binding site" evidence="1">
    <location>
        <begin position="115"/>
        <end position="118"/>
    </location>
    <ligand>
        <name>GTP</name>
        <dbReference type="ChEBI" id="CHEBI:37565"/>
    </ligand>
</feature>
<feature type="modified residue" description="Cysteine methyl ester" evidence="1">
    <location>
        <position position="189"/>
    </location>
</feature>
<feature type="lipid moiety-binding region" description="S-geranylgeranyl cysteine" evidence="1">
    <location>
        <position position="189"/>
    </location>
</feature>
<feature type="cross-link" description="Glycyl lysine isopeptide (Lys-Gly) (interchain with G-Cter in ubiquitin)" evidence="2">
    <location>
        <position position="166"/>
    </location>
</feature>
<dbReference type="EC" id="3.6.5.2" evidence="2"/>
<dbReference type="EMBL" id="AB040819">
    <property type="protein sequence ID" value="BAB40573.1"/>
    <property type="molecule type" value="mRNA"/>
</dbReference>
<dbReference type="EMBL" id="AK089930">
    <property type="protein sequence ID" value="BAC41001.1"/>
    <property type="molecule type" value="mRNA"/>
</dbReference>
<dbReference type="CCDS" id="CCDS25754.1"/>
<dbReference type="RefSeq" id="NP_573486.1">
    <property type="nucleotide sequence ID" value="NM_133223.4"/>
</dbReference>
<dbReference type="SMR" id="P60764"/>
<dbReference type="BioGRID" id="228420">
    <property type="interactions" value="4"/>
</dbReference>
<dbReference type="FunCoup" id="P60764">
    <property type="interactions" value="2074"/>
</dbReference>
<dbReference type="IntAct" id="P60764">
    <property type="interactions" value="5"/>
</dbReference>
<dbReference type="MINT" id="P60764"/>
<dbReference type="STRING" id="10090.ENSMUSP00000018156"/>
<dbReference type="GlyGen" id="P60764">
    <property type="glycosylation" value="1 site, 1 O-linked glycan (1 site)"/>
</dbReference>
<dbReference type="iPTMnet" id="P60764"/>
<dbReference type="PhosphoSitePlus" id="P60764"/>
<dbReference type="SwissPalm" id="P60764"/>
<dbReference type="jPOST" id="P60764"/>
<dbReference type="PaxDb" id="10090-ENSMUSP00000018156"/>
<dbReference type="PeptideAtlas" id="P60764"/>
<dbReference type="ProteomicsDB" id="300388"/>
<dbReference type="Pumba" id="P60764"/>
<dbReference type="Antibodypedia" id="32958">
    <property type="antibodies" value="100 antibodies from 25 providers"/>
</dbReference>
<dbReference type="DNASU" id="170758"/>
<dbReference type="Ensembl" id="ENSMUST00000018156.12">
    <property type="protein sequence ID" value="ENSMUSP00000018156.6"/>
    <property type="gene ID" value="ENSMUSG00000018012.12"/>
</dbReference>
<dbReference type="GeneID" id="170758"/>
<dbReference type="KEGG" id="mmu:170758"/>
<dbReference type="UCSC" id="uc007mug.1">
    <property type="organism name" value="mouse"/>
</dbReference>
<dbReference type="AGR" id="MGI:2180784"/>
<dbReference type="CTD" id="5881"/>
<dbReference type="MGI" id="MGI:2180784">
    <property type="gene designation" value="Rac3"/>
</dbReference>
<dbReference type="VEuPathDB" id="HostDB:ENSMUSG00000018012"/>
<dbReference type="eggNOG" id="KOG0393">
    <property type="taxonomic scope" value="Eukaryota"/>
</dbReference>
<dbReference type="GeneTree" id="ENSGT00940000153500"/>
<dbReference type="HOGENOM" id="CLU_041217_21_3_1"/>
<dbReference type="InParanoid" id="P60764"/>
<dbReference type="OMA" id="RRMAPIT"/>
<dbReference type="OrthoDB" id="8830751at2759"/>
<dbReference type="PhylomeDB" id="P60764"/>
<dbReference type="TreeFam" id="TF101109"/>
<dbReference type="Reactome" id="R-MMU-4086400">
    <property type="pathway name" value="PCP/CE pathway"/>
</dbReference>
<dbReference type="Reactome" id="R-MMU-9013423">
    <property type="pathway name" value="RAC3 GTPase cycle"/>
</dbReference>
<dbReference type="BioGRID-ORCS" id="170758">
    <property type="hits" value="2 hits in 78 CRISPR screens"/>
</dbReference>
<dbReference type="PRO" id="PR:P60764"/>
<dbReference type="Proteomes" id="UP000000589">
    <property type="component" value="Chromosome 11"/>
</dbReference>
<dbReference type="RNAct" id="P60764">
    <property type="molecule type" value="protein"/>
</dbReference>
<dbReference type="Bgee" id="ENSMUSG00000018012">
    <property type="expression patterns" value="Expressed in embryonic brain and 196 other cell types or tissues"/>
</dbReference>
<dbReference type="ExpressionAtlas" id="P60764">
    <property type="expression patterns" value="baseline and differential"/>
</dbReference>
<dbReference type="GO" id="GO:0071944">
    <property type="term" value="C:cell periphery"/>
    <property type="evidence" value="ECO:0000250"/>
    <property type="project" value="UniProtKB"/>
</dbReference>
<dbReference type="GO" id="GO:0012505">
    <property type="term" value="C:endomembrane system"/>
    <property type="evidence" value="ECO:0000250"/>
    <property type="project" value="UniProtKB"/>
</dbReference>
<dbReference type="GO" id="GO:0031941">
    <property type="term" value="C:filamentous actin"/>
    <property type="evidence" value="ECO:0000266"/>
    <property type="project" value="MGI"/>
</dbReference>
<dbReference type="GO" id="GO:0098978">
    <property type="term" value="C:glutamatergic synapse"/>
    <property type="evidence" value="ECO:0000314"/>
    <property type="project" value="SynGO"/>
</dbReference>
<dbReference type="GO" id="GO:0030426">
    <property type="term" value="C:growth cone"/>
    <property type="evidence" value="ECO:0000266"/>
    <property type="project" value="MGI"/>
</dbReference>
<dbReference type="GO" id="GO:0030027">
    <property type="term" value="C:lamellipodium"/>
    <property type="evidence" value="ECO:0007669"/>
    <property type="project" value="UniProtKB-SubCell"/>
</dbReference>
<dbReference type="GO" id="GO:0043005">
    <property type="term" value="C:neuron projection"/>
    <property type="evidence" value="ECO:0000266"/>
    <property type="project" value="MGI"/>
</dbReference>
<dbReference type="GO" id="GO:0043025">
    <property type="term" value="C:neuronal cell body"/>
    <property type="evidence" value="ECO:0000266"/>
    <property type="project" value="MGI"/>
</dbReference>
<dbReference type="GO" id="GO:0048471">
    <property type="term" value="C:perinuclear region of cytoplasm"/>
    <property type="evidence" value="ECO:0000250"/>
    <property type="project" value="UniProtKB"/>
</dbReference>
<dbReference type="GO" id="GO:0005886">
    <property type="term" value="C:plasma membrane"/>
    <property type="evidence" value="ECO:0007669"/>
    <property type="project" value="UniProtKB-SubCell"/>
</dbReference>
<dbReference type="GO" id="GO:0098794">
    <property type="term" value="C:postsynapse"/>
    <property type="evidence" value="ECO:0000314"/>
    <property type="project" value="SynGO"/>
</dbReference>
<dbReference type="GO" id="GO:0048306">
    <property type="term" value="F:calcium-dependent protein binding"/>
    <property type="evidence" value="ECO:0007669"/>
    <property type="project" value="Ensembl"/>
</dbReference>
<dbReference type="GO" id="GO:0003925">
    <property type="term" value="F:G protein activity"/>
    <property type="evidence" value="ECO:0007669"/>
    <property type="project" value="UniProtKB-EC"/>
</dbReference>
<dbReference type="GO" id="GO:0005525">
    <property type="term" value="F:GTP binding"/>
    <property type="evidence" value="ECO:0007669"/>
    <property type="project" value="UniProtKB-KW"/>
</dbReference>
<dbReference type="GO" id="GO:0003924">
    <property type="term" value="F:GTPase activity"/>
    <property type="evidence" value="ECO:0000250"/>
    <property type="project" value="UniProtKB"/>
</dbReference>
<dbReference type="GO" id="GO:0030036">
    <property type="term" value="P:actin cytoskeleton organization"/>
    <property type="evidence" value="ECO:0000250"/>
    <property type="project" value="UniProtKB"/>
</dbReference>
<dbReference type="GO" id="GO:0030031">
    <property type="term" value="P:cell projection assembly"/>
    <property type="evidence" value="ECO:0000250"/>
    <property type="project" value="UniProtKB"/>
</dbReference>
<dbReference type="GO" id="GO:0021894">
    <property type="term" value="P:cerebral cortex GABAergic interneuron development"/>
    <property type="evidence" value="ECO:0000316"/>
    <property type="project" value="MGI"/>
</dbReference>
<dbReference type="GO" id="GO:0048873">
    <property type="term" value="P:homeostasis of number of cells within a tissue"/>
    <property type="evidence" value="ECO:0000316"/>
    <property type="project" value="MGI"/>
</dbReference>
<dbReference type="GO" id="GO:0050905">
    <property type="term" value="P:neuromuscular process"/>
    <property type="evidence" value="ECO:0000315"/>
    <property type="project" value="MGI"/>
</dbReference>
<dbReference type="GO" id="GO:0050885">
    <property type="term" value="P:neuromuscular process controlling balance"/>
    <property type="evidence" value="ECO:0000315"/>
    <property type="project" value="MGI"/>
</dbReference>
<dbReference type="GO" id="GO:0031175">
    <property type="term" value="P:neuron projection development"/>
    <property type="evidence" value="ECO:0000314"/>
    <property type="project" value="MGI"/>
</dbReference>
<dbReference type="GO" id="GO:0033630">
    <property type="term" value="P:positive regulation of cell adhesion mediated by integrin"/>
    <property type="evidence" value="ECO:0000250"/>
    <property type="project" value="UniProtKB"/>
</dbReference>
<dbReference type="GO" id="GO:1900026">
    <property type="term" value="P:positive regulation of substrate adhesion-dependent cell spreading"/>
    <property type="evidence" value="ECO:0000250"/>
    <property type="project" value="UniProtKB"/>
</dbReference>
<dbReference type="GO" id="GO:0098974">
    <property type="term" value="P:postsynaptic actin cytoskeleton organization"/>
    <property type="evidence" value="ECO:0007669"/>
    <property type="project" value="Ensembl"/>
</dbReference>
<dbReference type="GO" id="GO:0022604">
    <property type="term" value="P:regulation of cell morphogenesis"/>
    <property type="evidence" value="ECO:0000316"/>
    <property type="project" value="MGI"/>
</dbReference>
<dbReference type="GO" id="GO:0014041">
    <property type="term" value="P:regulation of neuron maturation"/>
    <property type="evidence" value="ECO:0000316"/>
    <property type="project" value="MGI"/>
</dbReference>
<dbReference type="GO" id="GO:0150052">
    <property type="term" value="P:regulation of postsynapse assembly"/>
    <property type="evidence" value="ECO:0000314"/>
    <property type="project" value="SynGO"/>
</dbReference>
<dbReference type="GO" id="GO:0007264">
    <property type="term" value="P:small GTPase-mediated signal transduction"/>
    <property type="evidence" value="ECO:0007669"/>
    <property type="project" value="InterPro"/>
</dbReference>
<dbReference type="GO" id="GO:0051932">
    <property type="term" value="P:synaptic transmission, GABAergic"/>
    <property type="evidence" value="ECO:0000316"/>
    <property type="project" value="MGI"/>
</dbReference>
<dbReference type="GO" id="GO:0016055">
    <property type="term" value="P:Wnt signaling pathway"/>
    <property type="evidence" value="ECO:0007669"/>
    <property type="project" value="Ensembl"/>
</dbReference>
<dbReference type="CDD" id="cd01871">
    <property type="entry name" value="Rac1_like"/>
    <property type="match status" value="1"/>
</dbReference>
<dbReference type="FunFam" id="3.40.50.300:FF:000088">
    <property type="entry name" value="Ras-related C3 botulinum toxin substrate 1"/>
    <property type="match status" value="1"/>
</dbReference>
<dbReference type="Gene3D" id="3.40.50.300">
    <property type="entry name" value="P-loop containing nucleotide triphosphate hydrolases"/>
    <property type="match status" value="1"/>
</dbReference>
<dbReference type="InterPro" id="IPR027417">
    <property type="entry name" value="P-loop_NTPase"/>
</dbReference>
<dbReference type="InterPro" id="IPR005225">
    <property type="entry name" value="Small_GTP-bd"/>
</dbReference>
<dbReference type="InterPro" id="IPR001806">
    <property type="entry name" value="Small_GTPase"/>
</dbReference>
<dbReference type="InterPro" id="IPR003578">
    <property type="entry name" value="Small_GTPase_Rho"/>
</dbReference>
<dbReference type="NCBIfam" id="TIGR00231">
    <property type="entry name" value="small_GTP"/>
    <property type="match status" value="1"/>
</dbReference>
<dbReference type="PANTHER" id="PTHR24072">
    <property type="entry name" value="RHO FAMILY GTPASE"/>
    <property type="match status" value="1"/>
</dbReference>
<dbReference type="Pfam" id="PF00071">
    <property type="entry name" value="Ras"/>
    <property type="match status" value="1"/>
</dbReference>
<dbReference type="PRINTS" id="PR00449">
    <property type="entry name" value="RASTRNSFRMNG"/>
</dbReference>
<dbReference type="SMART" id="SM00175">
    <property type="entry name" value="RAB"/>
    <property type="match status" value="1"/>
</dbReference>
<dbReference type="SMART" id="SM00173">
    <property type="entry name" value="RAS"/>
    <property type="match status" value="1"/>
</dbReference>
<dbReference type="SMART" id="SM00174">
    <property type="entry name" value="RHO"/>
    <property type="match status" value="1"/>
</dbReference>
<dbReference type="SUPFAM" id="SSF52540">
    <property type="entry name" value="P-loop containing nucleoside triphosphate hydrolases"/>
    <property type="match status" value="1"/>
</dbReference>
<dbReference type="PROSITE" id="PS51420">
    <property type="entry name" value="RHO"/>
    <property type="match status" value="1"/>
</dbReference>
<reference key="1">
    <citation type="submission" date="2000-03" db="EMBL/GenBank/DDBJ databases">
        <title>Mouse Rac3.</title>
        <authorList>
            <person name="Koga H."/>
            <person name="Sumimoto H."/>
        </authorList>
    </citation>
    <scope>NUCLEOTIDE SEQUENCE [MRNA]</scope>
</reference>
<reference key="2">
    <citation type="journal article" date="2005" name="Science">
        <title>The transcriptional landscape of the mammalian genome.</title>
        <authorList>
            <person name="Carninci P."/>
            <person name="Kasukawa T."/>
            <person name="Katayama S."/>
            <person name="Gough J."/>
            <person name="Frith M.C."/>
            <person name="Maeda N."/>
            <person name="Oyama R."/>
            <person name="Ravasi T."/>
            <person name="Lenhard B."/>
            <person name="Wells C."/>
            <person name="Kodzius R."/>
            <person name="Shimokawa K."/>
            <person name="Bajic V.B."/>
            <person name="Brenner S.E."/>
            <person name="Batalov S."/>
            <person name="Forrest A.R."/>
            <person name="Zavolan M."/>
            <person name="Davis M.J."/>
            <person name="Wilming L.G."/>
            <person name="Aidinis V."/>
            <person name="Allen J.E."/>
            <person name="Ambesi-Impiombato A."/>
            <person name="Apweiler R."/>
            <person name="Aturaliya R.N."/>
            <person name="Bailey T.L."/>
            <person name="Bansal M."/>
            <person name="Baxter L."/>
            <person name="Beisel K.W."/>
            <person name="Bersano T."/>
            <person name="Bono H."/>
            <person name="Chalk A.M."/>
            <person name="Chiu K.P."/>
            <person name="Choudhary V."/>
            <person name="Christoffels A."/>
            <person name="Clutterbuck D.R."/>
            <person name="Crowe M.L."/>
            <person name="Dalla E."/>
            <person name="Dalrymple B.P."/>
            <person name="de Bono B."/>
            <person name="Della Gatta G."/>
            <person name="di Bernardo D."/>
            <person name="Down T."/>
            <person name="Engstrom P."/>
            <person name="Fagiolini M."/>
            <person name="Faulkner G."/>
            <person name="Fletcher C.F."/>
            <person name="Fukushima T."/>
            <person name="Furuno M."/>
            <person name="Futaki S."/>
            <person name="Gariboldi M."/>
            <person name="Georgii-Hemming P."/>
            <person name="Gingeras T.R."/>
            <person name="Gojobori T."/>
            <person name="Green R.E."/>
            <person name="Gustincich S."/>
            <person name="Harbers M."/>
            <person name="Hayashi Y."/>
            <person name="Hensch T.K."/>
            <person name="Hirokawa N."/>
            <person name="Hill D."/>
            <person name="Huminiecki L."/>
            <person name="Iacono M."/>
            <person name="Ikeo K."/>
            <person name="Iwama A."/>
            <person name="Ishikawa T."/>
            <person name="Jakt M."/>
            <person name="Kanapin A."/>
            <person name="Katoh M."/>
            <person name="Kawasawa Y."/>
            <person name="Kelso J."/>
            <person name="Kitamura H."/>
            <person name="Kitano H."/>
            <person name="Kollias G."/>
            <person name="Krishnan S.P."/>
            <person name="Kruger A."/>
            <person name="Kummerfeld S.K."/>
            <person name="Kurochkin I.V."/>
            <person name="Lareau L.F."/>
            <person name="Lazarevic D."/>
            <person name="Lipovich L."/>
            <person name="Liu J."/>
            <person name="Liuni S."/>
            <person name="McWilliam S."/>
            <person name="Madan Babu M."/>
            <person name="Madera M."/>
            <person name="Marchionni L."/>
            <person name="Matsuda H."/>
            <person name="Matsuzawa S."/>
            <person name="Miki H."/>
            <person name="Mignone F."/>
            <person name="Miyake S."/>
            <person name="Morris K."/>
            <person name="Mottagui-Tabar S."/>
            <person name="Mulder N."/>
            <person name="Nakano N."/>
            <person name="Nakauchi H."/>
            <person name="Ng P."/>
            <person name="Nilsson R."/>
            <person name="Nishiguchi S."/>
            <person name="Nishikawa S."/>
            <person name="Nori F."/>
            <person name="Ohara O."/>
            <person name="Okazaki Y."/>
            <person name="Orlando V."/>
            <person name="Pang K.C."/>
            <person name="Pavan W.J."/>
            <person name="Pavesi G."/>
            <person name="Pesole G."/>
            <person name="Petrovsky N."/>
            <person name="Piazza S."/>
            <person name="Reed J."/>
            <person name="Reid J.F."/>
            <person name="Ring B.Z."/>
            <person name="Ringwald M."/>
            <person name="Rost B."/>
            <person name="Ruan Y."/>
            <person name="Salzberg S.L."/>
            <person name="Sandelin A."/>
            <person name="Schneider C."/>
            <person name="Schoenbach C."/>
            <person name="Sekiguchi K."/>
            <person name="Semple C.A."/>
            <person name="Seno S."/>
            <person name="Sessa L."/>
            <person name="Sheng Y."/>
            <person name="Shibata Y."/>
            <person name="Shimada H."/>
            <person name="Shimada K."/>
            <person name="Silva D."/>
            <person name="Sinclair B."/>
            <person name="Sperling S."/>
            <person name="Stupka E."/>
            <person name="Sugiura K."/>
            <person name="Sultana R."/>
            <person name="Takenaka Y."/>
            <person name="Taki K."/>
            <person name="Tammoja K."/>
            <person name="Tan S.L."/>
            <person name="Tang S."/>
            <person name="Taylor M.S."/>
            <person name="Tegner J."/>
            <person name="Teichmann S.A."/>
            <person name="Ueda H.R."/>
            <person name="van Nimwegen E."/>
            <person name="Verardo R."/>
            <person name="Wei C.L."/>
            <person name="Yagi K."/>
            <person name="Yamanishi H."/>
            <person name="Zabarovsky E."/>
            <person name="Zhu S."/>
            <person name="Zimmer A."/>
            <person name="Hide W."/>
            <person name="Bult C."/>
            <person name="Grimmond S.M."/>
            <person name="Teasdale R.D."/>
            <person name="Liu E.T."/>
            <person name="Brusic V."/>
            <person name="Quackenbush J."/>
            <person name="Wahlestedt C."/>
            <person name="Mattick J.S."/>
            <person name="Hume D.A."/>
            <person name="Kai C."/>
            <person name="Sasaki D."/>
            <person name="Tomaru Y."/>
            <person name="Fukuda S."/>
            <person name="Kanamori-Katayama M."/>
            <person name="Suzuki M."/>
            <person name="Aoki J."/>
            <person name="Arakawa T."/>
            <person name="Iida J."/>
            <person name="Imamura K."/>
            <person name="Itoh M."/>
            <person name="Kato T."/>
            <person name="Kawaji H."/>
            <person name="Kawagashira N."/>
            <person name="Kawashima T."/>
            <person name="Kojima M."/>
            <person name="Kondo S."/>
            <person name="Konno H."/>
            <person name="Nakano K."/>
            <person name="Ninomiya N."/>
            <person name="Nishio T."/>
            <person name="Okada M."/>
            <person name="Plessy C."/>
            <person name="Shibata K."/>
            <person name="Shiraki T."/>
            <person name="Suzuki S."/>
            <person name="Tagami M."/>
            <person name="Waki K."/>
            <person name="Watahiki A."/>
            <person name="Okamura-Oho Y."/>
            <person name="Suzuki H."/>
            <person name="Kawai J."/>
            <person name="Hayashizaki Y."/>
        </authorList>
    </citation>
    <scope>NUCLEOTIDE SEQUENCE [LARGE SCALE MRNA]</scope>
    <source>
        <strain>Swiss Webster</strain>
        <tissue>Submandibular gland</tissue>
    </source>
</reference>
<reference key="3">
    <citation type="journal article" date="2010" name="Cell">
        <title>A tissue-specific atlas of mouse protein phosphorylation and expression.</title>
        <authorList>
            <person name="Huttlin E.L."/>
            <person name="Jedrychowski M.P."/>
            <person name="Elias J.E."/>
            <person name="Goswami T."/>
            <person name="Rad R."/>
            <person name="Beausoleil S.A."/>
            <person name="Villen J."/>
            <person name="Haas W."/>
            <person name="Sowa M.E."/>
            <person name="Gygi S.P."/>
        </authorList>
    </citation>
    <scope>IDENTIFICATION BY MASS SPECTROMETRY [LARGE SCALE ANALYSIS]</scope>
    <source>
        <tissue>Brain</tissue>
    </source>
</reference>
<sequence length="192" mass="21379">MQAIKCVVVGDGAVGKTCLLISYTTNAFPGEYIPTVFDNYSANVMVDGKPVNLGLWDTAGQEDYDRLRPLSYPQTDVFLICFSLVSPASFENVRAKWYPEVRHHCPHTPILLVGTKLDLRDDKDTIERLRDKKLAPITYPQGLAMAREIGSVKYLECSALTQRGLKTVFDEAIRAVLCPPPVKKPGKKCTVF</sequence>
<evidence type="ECO:0000250" key="1"/>
<evidence type="ECO:0000250" key="2">
    <source>
        <dbReference type="UniProtKB" id="P60763"/>
    </source>
</evidence>
<evidence type="ECO:0000255" key="3"/>
<evidence type="ECO:0000305" key="4"/>
<evidence type="ECO:0000312" key="5">
    <source>
        <dbReference type="MGI" id="MGI:2180784"/>
    </source>
</evidence>